<gene>
    <name type="primary">APOC3</name>
</gene>
<evidence type="ECO:0000250" key="1"/>
<evidence type="ECO:0000250" key="2">
    <source>
        <dbReference type="UniProtKB" id="P02656"/>
    </source>
</evidence>
<evidence type="ECO:0000250" key="3">
    <source>
        <dbReference type="UniProtKB" id="P33622"/>
    </source>
</evidence>
<evidence type="ECO:0000305" key="4"/>
<name>APOC3_CAVPO</name>
<feature type="signal peptide" evidence="1">
    <location>
        <begin position="1"/>
        <end position="20"/>
    </location>
</feature>
<feature type="chain" id="PRO_0000002030" description="Apolipoprotein C-III">
    <location>
        <begin position="21"/>
        <end position="91"/>
    </location>
</feature>
<feature type="region of interest" description="Lipid-binding" evidence="1">
    <location>
        <begin position="68"/>
        <end position="91"/>
    </location>
</feature>
<feature type="site" description="May interact with the LDL receptor" evidence="2">
    <location>
        <position position="41"/>
    </location>
</feature>
<feature type="modified residue" description="Methionine sulfoxide" evidence="3">
    <location>
        <position position="63"/>
    </location>
</feature>
<comment type="function">
    <text evidence="2">Component of triglyceride-rich very low density lipoproteins (VLDL) and high density lipoproteins (HDL) in plasma. Plays a multifaceted role in triglyceride homeostasis. Intracellularly, promotes hepatic very low density lipoprotein 1 (VLDL1) assembly and secretion; extracellularly, attenuates hydrolysis and clearance of triglyceride-rich lipoproteins (TRLs). Impairs the lipolysis of TRLs by inhibiting lipoprotein lipase and the hepatic uptake of TRLs by remnant receptors. Formed of several curved helices connected via semiflexible hinges, so that it can wrap tightly around the curved micelle surface and easily adapt to the different diameters of its natural binding partners.</text>
</comment>
<comment type="subcellular location">
    <subcellularLocation>
        <location evidence="2">Secreted</location>
    </subcellularLocation>
</comment>
<comment type="similarity">
    <text evidence="4">Belongs to the apolipoprotein C3 family.</text>
</comment>
<organism>
    <name type="scientific">Cavia porcellus</name>
    <name type="common">Guinea pig</name>
    <dbReference type="NCBI Taxonomy" id="10141"/>
    <lineage>
        <taxon>Eukaryota</taxon>
        <taxon>Metazoa</taxon>
        <taxon>Chordata</taxon>
        <taxon>Craniata</taxon>
        <taxon>Vertebrata</taxon>
        <taxon>Euteleostomi</taxon>
        <taxon>Mammalia</taxon>
        <taxon>Eutheria</taxon>
        <taxon>Euarchontoglires</taxon>
        <taxon>Glires</taxon>
        <taxon>Rodentia</taxon>
        <taxon>Hystricomorpha</taxon>
        <taxon>Caviidae</taxon>
        <taxon>Cavia</taxon>
    </lineage>
</organism>
<accession>Q9Z2R5</accession>
<proteinExistence type="inferred from homology"/>
<dbReference type="EMBL" id="AF030571">
    <property type="protein sequence ID" value="AAD01908.1"/>
    <property type="molecule type" value="mRNA"/>
</dbReference>
<dbReference type="RefSeq" id="NP_001166386.1">
    <property type="nucleotide sequence ID" value="NM_001172915.1"/>
</dbReference>
<dbReference type="RefSeq" id="XP_013010825.1">
    <property type="nucleotide sequence ID" value="XM_013155371.1"/>
</dbReference>
<dbReference type="SMR" id="Q9Z2R5"/>
<dbReference type="FunCoup" id="Q9Z2R5">
    <property type="interactions" value="99"/>
</dbReference>
<dbReference type="STRING" id="10141.ENSCPOP00000016494"/>
<dbReference type="Ensembl" id="ENSCPOT00000027097.2">
    <property type="protein sequence ID" value="ENSCPOP00000016494.1"/>
    <property type="gene ID" value="ENSCPOG00000025900.2"/>
</dbReference>
<dbReference type="GeneID" id="100135481"/>
<dbReference type="KEGG" id="cpoc:100135481"/>
<dbReference type="CTD" id="345"/>
<dbReference type="VEuPathDB" id="HostDB:ENSCPOG00000025900"/>
<dbReference type="GeneTree" id="ENSGT00390000015395"/>
<dbReference type="HOGENOM" id="CLU_154694_0_0_1"/>
<dbReference type="InParanoid" id="Q9Z2R5"/>
<dbReference type="OMA" id="YWSTFKG"/>
<dbReference type="OrthoDB" id="9049572at2759"/>
<dbReference type="TreeFam" id="TF338209"/>
<dbReference type="Proteomes" id="UP000005447">
    <property type="component" value="Unassembled WGS sequence"/>
</dbReference>
<dbReference type="Bgee" id="ENSCPOG00000025900">
    <property type="expression patterns" value="Expressed in liver and 10 other cell types or tissues"/>
</dbReference>
<dbReference type="GO" id="GO:0042627">
    <property type="term" value="C:chylomicron"/>
    <property type="evidence" value="ECO:0007669"/>
    <property type="project" value="UniProtKB-KW"/>
</dbReference>
<dbReference type="GO" id="GO:0034363">
    <property type="term" value="C:intermediate-density lipoprotein particle"/>
    <property type="evidence" value="ECO:0007669"/>
    <property type="project" value="TreeGrafter"/>
</dbReference>
<dbReference type="GO" id="GO:0034366">
    <property type="term" value="C:spherical high-density lipoprotein particle"/>
    <property type="evidence" value="ECO:0007669"/>
    <property type="project" value="TreeGrafter"/>
</dbReference>
<dbReference type="GO" id="GO:0034361">
    <property type="term" value="C:very-low-density lipoprotein particle"/>
    <property type="evidence" value="ECO:0007669"/>
    <property type="project" value="UniProtKB-KW"/>
</dbReference>
<dbReference type="GO" id="GO:0070653">
    <property type="term" value="F:high-density lipoprotein particle receptor binding"/>
    <property type="evidence" value="ECO:0007669"/>
    <property type="project" value="TreeGrafter"/>
</dbReference>
<dbReference type="GO" id="GO:0055102">
    <property type="term" value="F:lipase inhibitor activity"/>
    <property type="evidence" value="ECO:0007669"/>
    <property type="project" value="TreeGrafter"/>
</dbReference>
<dbReference type="GO" id="GO:0005543">
    <property type="term" value="F:phospholipid binding"/>
    <property type="evidence" value="ECO:0007669"/>
    <property type="project" value="TreeGrafter"/>
</dbReference>
<dbReference type="GO" id="GO:0042632">
    <property type="term" value="P:cholesterol homeostasis"/>
    <property type="evidence" value="ECO:0007669"/>
    <property type="project" value="TreeGrafter"/>
</dbReference>
<dbReference type="GO" id="GO:0016042">
    <property type="term" value="P:lipid catabolic process"/>
    <property type="evidence" value="ECO:0007669"/>
    <property type="project" value="UniProtKB-KW"/>
</dbReference>
<dbReference type="GO" id="GO:0006869">
    <property type="term" value="P:lipid transport"/>
    <property type="evidence" value="ECO:0007669"/>
    <property type="project" value="UniProtKB-KW"/>
</dbReference>
<dbReference type="GO" id="GO:0042157">
    <property type="term" value="P:lipoprotein metabolic process"/>
    <property type="evidence" value="ECO:0007669"/>
    <property type="project" value="InterPro"/>
</dbReference>
<dbReference type="GO" id="GO:0010987">
    <property type="term" value="P:negative regulation of high-density lipoprotein particle clearance"/>
    <property type="evidence" value="ECO:0007669"/>
    <property type="project" value="TreeGrafter"/>
</dbReference>
<dbReference type="GO" id="GO:0010989">
    <property type="term" value="P:negative regulation of low-density lipoprotein particle clearance"/>
    <property type="evidence" value="ECO:0007669"/>
    <property type="project" value="TreeGrafter"/>
</dbReference>
<dbReference type="GO" id="GO:0010897">
    <property type="term" value="P:negative regulation of triglyceride catabolic process"/>
    <property type="evidence" value="ECO:0007669"/>
    <property type="project" value="TreeGrafter"/>
</dbReference>
<dbReference type="GO" id="GO:0010916">
    <property type="term" value="P:negative regulation of very-low-density lipoprotein particle clearance"/>
    <property type="evidence" value="ECO:0007669"/>
    <property type="project" value="TreeGrafter"/>
</dbReference>
<dbReference type="GO" id="GO:0070328">
    <property type="term" value="P:triglyceride homeostasis"/>
    <property type="evidence" value="ECO:0007669"/>
    <property type="project" value="TreeGrafter"/>
</dbReference>
<dbReference type="Gene3D" id="6.10.90.10">
    <property type="entry name" value="Apolipoprotein CIII"/>
    <property type="match status" value="1"/>
</dbReference>
<dbReference type="InterPro" id="IPR008403">
    <property type="entry name" value="Apo-CIII"/>
</dbReference>
<dbReference type="InterPro" id="IPR038195">
    <property type="entry name" value="Apo_CIII_sf"/>
</dbReference>
<dbReference type="PANTHER" id="PTHR14225">
    <property type="entry name" value="APOLIPOPROTEIN C-III"/>
    <property type="match status" value="1"/>
</dbReference>
<dbReference type="PANTHER" id="PTHR14225:SF0">
    <property type="entry name" value="APOLIPOPROTEIN C-III"/>
    <property type="match status" value="1"/>
</dbReference>
<dbReference type="Pfam" id="PF05778">
    <property type="entry name" value="Apo-CIII"/>
    <property type="match status" value="1"/>
</dbReference>
<dbReference type="SUPFAM" id="SSF47162">
    <property type="entry name" value="Apolipoprotein"/>
    <property type="match status" value="1"/>
</dbReference>
<protein>
    <recommendedName>
        <fullName>Apolipoprotein C-III</fullName>
        <shortName>Apo-CIII</shortName>
        <shortName>ApoC-III</shortName>
    </recommendedName>
    <alternativeName>
        <fullName>Apolipoprotein C3</fullName>
    </alternativeName>
</protein>
<sequence>MQPRVLLAVTLLALLVSARAEEIQESSLLGVMKDYMQQASKTANEMLTKVQESQVAENAREWMTESLDSMKGYWTSLIGRLSGFLDSTPSS</sequence>
<keyword id="KW-0162">Chylomicron</keyword>
<keyword id="KW-0442">Lipid degradation</keyword>
<keyword id="KW-0443">Lipid metabolism</keyword>
<keyword id="KW-0445">Lipid transport</keyword>
<keyword id="KW-0558">Oxidation</keyword>
<keyword id="KW-1185">Reference proteome</keyword>
<keyword id="KW-0964">Secreted</keyword>
<keyword id="KW-0732">Signal</keyword>
<keyword id="KW-0813">Transport</keyword>
<keyword id="KW-0850">VLDL</keyword>
<reference key="1">
    <citation type="journal article" date="1999" name="Comp. Biochem. Physiol.">
        <title>Apolipoprotein CIII from guinea pig (Cavia porcellus) is shorter and less homologous than apolipoprotein CIII from other mammals.</title>
        <authorList>
            <person name="Yin Y."/>
            <person name="Olivecrona G."/>
        </authorList>
    </citation>
    <scope>NUCLEOTIDE SEQUENCE [MRNA]</scope>
    <source>
        <tissue>Liver</tissue>
    </source>
</reference>